<feature type="chain" id="PRO_0000202992" description="Nuclear membrane organization protein APQ12">
    <location>
        <begin position="1"/>
        <end position="138"/>
    </location>
</feature>
<feature type="topological domain" description="Cytoplasmic" evidence="1">
    <location>
        <begin position="1"/>
        <end position="39"/>
    </location>
</feature>
<feature type="transmembrane region" description="Helical" evidence="1">
    <location>
        <begin position="40"/>
        <end position="58"/>
    </location>
</feature>
<feature type="topological domain" description="Perinuclear space" evidence="1">
    <location>
        <begin position="59"/>
        <end position="67"/>
    </location>
</feature>
<feature type="transmembrane region" description="Helical" evidence="1">
    <location>
        <begin position="68"/>
        <end position="84"/>
    </location>
</feature>
<feature type="topological domain" description="Cytoplasmic" evidence="1">
    <location>
        <begin position="85"/>
        <end position="138"/>
    </location>
</feature>
<protein>
    <recommendedName>
        <fullName>Nuclear membrane organization protein APQ12</fullName>
    </recommendedName>
</protein>
<organism>
    <name type="scientific">Saccharomyces cerevisiae (strain ATCC 204508 / S288c)</name>
    <name type="common">Baker's yeast</name>
    <dbReference type="NCBI Taxonomy" id="559292"/>
    <lineage>
        <taxon>Eukaryota</taxon>
        <taxon>Fungi</taxon>
        <taxon>Dikarya</taxon>
        <taxon>Ascomycota</taxon>
        <taxon>Saccharomycotina</taxon>
        <taxon>Saccharomycetes</taxon>
        <taxon>Saccharomycetales</taxon>
        <taxon>Saccharomycetaceae</taxon>
        <taxon>Saccharomyces</taxon>
    </lineage>
</organism>
<keyword id="KW-0256">Endoplasmic reticulum</keyword>
<keyword id="KW-0472">Membrane</keyword>
<keyword id="KW-0509">mRNA transport</keyword>
<keyword id="KW-0539">Nucleus</keyword>
<keyword id="KW-1185">Reference proteome</keyword>
<keyword id="KW-0812">Transmembrane</keyword>
<keyword id="KW-1133">Transmembrane helix</keyword>
<keyword id="KW-0813">Transport</keyword>
<proteinExistence type="evidence at protein level"/>
<evidence type="ECO:0000255" key="1"/>
<evidence type="ECO:0000269" key="2">
    <source>
    </source>
</evidence>
<evidence type="ECO:0000269" key="3">
    <source>
    </source>
</evidence>
<evidence type="ECO:0000269" key="4">
    <source>
    </source>
</evidence>
<evidence type="ECO:0000305" key="5"/>
<dbReference type="EMBL" id="Z46861">
    <property type="protein sequence ID" value="CAA86911.1"/>
    <property type="molecule type" value="Genomic_DNA"/>
</dbReference>
<dbReference type="EMBL" id="BK006942">
    <property type="protein sequence ID" value="DAA08508.1"/>
    <property type="molecule type" value="Genomic_DNA"/>
</dbReference>
<dbReference type="PIR" id="S49938">
    <property type="entry name" value="S49938"/>
</dbReference>
<dbReference type="RefSeq" id="NP_012224.1">
    <property type="nucleotide sequence ID" value="NM_001179390.1"/>
</dbReference>
<dbReference type="SMR" id="P40532"/>
<dbReference type="BioGRID" id="34950">
    <property type="interactions" value="510"/>
</dbReference>
<dbReference type="DIP" id="DIP-5412N"/>
<dbReference type="FunCoup" id="P40532">
    <property type="interactions" value="43"/>
</dbReference>
<dbReference type="IntAct" id="P40532">
    <property type="interactions" value="4"/>
</dbReference>
<dbReference type="STRING" id="4932.YIL040W"/>
<dbReference type="TCDB" id="9.A.34.1.1">
    <property type="family name" value="the nuclear pore complex biogenesis (npc-b) family"/>
</dbReference>
<dbReference type="PaxDb" id="4932-YIL040W"/>
<dbReference type="PeptideAtlas" id="P40532"/>
<dbReference type="TopDownProteomics" id="P40532"/>
<dbReference type="EnsemblFungi" id="YIL040W_mRNA">
    <property type="protein sequence ID" value="YIL040W"/>
    <property type="gene ID" value="YIL040W"/>
</dbReference>
<dbReference type="GeneID" id="854771"/>
<dbReference type="KEGG" id="sce:YIL040W"/>
<dbReference type="AGR" id="SGD:S000001302"/>
<dbReference type="SGD" id="S000001302">
    <property type="gene designation" value="APQ12"/>
</dbReference>
<dbReference type="VEuPathDB" id="FungiDB:YIL040W"/>
<dbReference type="HOGENOM" id="CLU_1856860_0_0_1"/>
<dbReference type="InParanoid" id="P40532"/>
<dbReference type="OMA" id="TCIGIYM"/>
<dbReference type="OrthoDB" id="4065731at2759"/>
<dbReference type="BioCyc" id="YEAST:G3O-31312-MONOMER"/>
<dbReference type="BioGRID-ORCS" id="854771">
    <property type="hits" value="3 hits in 10 CRISPR screens"/>
</dbReference>
<dbReference type="PRO" id="PR:P40532"/>
<dbReference type="Proteomes" id="UP000002311">
    <property type="component" value="Chromosome IX"/>
</dbReference>
<dbReference type="RNAct" id="P40532">
    <property type="molecule type" value="protein"/>
</dbReference>
<dbReference type="GO" id="GO:0005783">
    <property type="term" value="C:endoplasmic reticulum"/>
    <property type="evidence" value="ECO:0000314"/>
    <property type="project" value="SGD"/>
</dbReference>
<dbReference type="GO" id="GO:0005789">
    <property type="term" value="C:endoplasmic reticulum membrane"/>
    <property type="evidence" value="ECO:0007669"/>
    <property type="project" value="UniProtKB-SubCell"/>
</dbReference>
<dbReference type="GO" id="GO:0016020">
    <property type="term" value="C:membrane"/>
    <property type="evidence" value="ECO:0000314"/>
    <property type="project" value="SGD"/>
</dbReference>
<dbReference type="GO" id="GO:0005635">
    <property type="term" value="C:nuclear envelope"/>
    <property type="evidence" value="ECO:0000314"/>
    <property type="project" value="SGD"/>
</dbReference>
<dbReference type="GO" id="GO:0031965">
    <property type="term" value="C:nuclear membrane"/>
    <property type="evidence" value="ECO:0007669"/>
    <property type="project" value="UniProtKB-SubCell"/>
</dbReference>
<dbReference type="GO" id="GO:0055088">
    <property type="term" value="P:lipid homeostasis"/>
    <property type="evidence" value="ECO:0000315"/>
    <property type="project" value="SGD"/>
</dbReference>
<dbReference type="GO" id="GO:0051028">
    <property type="term" value="P:mRNA transport"/>
    <property type="evidence" value="ECO:0007669"/>
    <property type="project" value="UniProtKB-KW"/>
</dbReference>
<dbReference type="GO" id="GO:0006998">
    <property type="term" value="P:nuclear envelope organization"/>
    <property type="evidence" value="ECO:0000315"/>
    <property type="project" value="SGD"/>
</dbReference>
<dbReference type="InterPro" id="IPR024316">
    <property type="entry name" value="APQ12"/>
</dbReference>
<dbReference type="Pfam" id="PF12716">
    <property type="entry name" value="Apq12"/>
    <property type="match status" value="1"/>
</dbReference>
<name>APQ12_YEAST</name>
<gene>
    <name type="primary">APQ12</name>
    <name type="ordered locus">YIL040W</name>
</gene>
<comment type="function">
    <text evidence="2 3 4">Involved in the regulation of lipid homeostasis in the endoplasmic reticulum, thereby impacting nuclear pore complex biogenesis and localization, and nucleocytoplasmic mRNA transport.</text>
</comment>
<comment type="subcellular location">
    <subcellularLocation>
        <location>Nucleus membrane</location>
        <topology>Multi-pass membrane protein</topology>
    </subcellularLocation>
    <subcellularLocation>
        <location>Endoplasmic reticulum membrane</location>
        <topology>Multi-pass membrane protein</topology>
    </subcellularLocation>
</comment>
<comment type="similarity">
    <text evidence="5">Belongs to the APQ12 family.</text>
</comment>
<sequence>MDATQPQYELSVVTQCLKSAIDVIQWLIPTITKFSQSHPLVFQLLFIFFTFYVFYKLLMNFITLVKRFLYLTLVVTCIGIYMRGSQQFLTVDLLNFYNFVMSNRYYAFKIYTLFINALEREINTVYHLAQMKMEQLLK</sequence>
<accession>P40532</accession>
<accession>D6VVP2</accession>
<reference key="1">
    <citation type="journal article" date="1997" name="Nature">
        <title>The nucleotide sequence of Saccharomyces cerevisiae chromosome IX.</title>
        <authorList>
            <person name="Churcher C.M."/>
            <person name="Bowman S."/>
            <person name="Badcock K."/>
            <person name="Bankier A.T."/>
            <person name="Brown D."/>
            <person name="Chillingworth T."/>
            <person name="Connor R."/>
            <person name="Devlin K."/>
            <person name="Gentles S."/>
            <person name="Hamlin N."/>
            <person name="Harris D.E."/>
            <person name="Horsnell T."/>
            <person name="Hunt S."/>
            <person name="Jagels K."/>
            <person name="Jones M."/>
            <person name="Lye G."/>
            <person name="Moule S."/>
            <person name="Odell C."/>
            <person name="Pearson D."/>
            <person name="Rajandream M.A."/>
            <person name="Rice P."/>
            <person name="Rowley N."/>
            <person name="Skelton J."/>
            <person name="Smith V."/>
            <person name="Walsh S.V."/>
            <person name="Whitehead S."/>
            <person name="Barrell B.G."/>
        </authorList>
    </citation>
    <scope>NUCLEOTIDE SEQUENCE [LARGE SCALE GENOMIC DNA]</scope>
    <source>
        <strain>ATCC 204508 / S288c</strain>
    </source>
</reference>
<reference key="2">
    <citation type="journal article" date="2014" name="G3 (Bethesda)">
        <title>The reference genome sequence of Saccharomyces cerevisiae: Then and now.</title>
        <authorList>
            <person name="Engel S.R."/>
            <person name="Dietrich F.S."/>
            <person name="Fisk D.G."/>
            <person name="Binkley G."/>
            <person name="Balakrishnan R."/>
            <person name="Costanzo M.C."/>
            <person name="Dwight S.S."/>
            <person name="Hitz B.C."/>
            <person name="Karra K."/>
            <person name="Nash R.S."/>
            <person name="Weng S."/>
            <person name="Wong E.D."/>
            <person name="Lloyd P."/>
            <person name="Skrzypek M.S."/>
            <person name="Miyasato S.R."/>
            <person name="Simison M."/>
            <person name="Cherry J.M."/>
        </authorList>
    </citation>
    <scope>GENOME REANNOTATION</scope>
    <source>
        <strain>ATCC 204508 / S288c</strain>
    </source>
</reference>
<reference key="3">
    <citation type="journal article" date="2003" name="Nature">
        <title>Global analysis of protein localization in budding yeast.</title>
        <authorList>
            <person name="Huh W.-K."/>
            <person name="Falvo J.V."/>
            <person name="Gerke L.C."/>
            <person name="Carroll A.S."/>
            <person name="Howson R.W."/>
            <person name="Weissman J.S."/>
            <person name="O'Shea E.K."/>
        </authorList>
    </citation>
    <scope>SUBCELLULAR LOCATION [LARGE SCALE ANALYSIS]</scope>
</reference>
<reference key="4">
    <citation type="journal article" date="2004" name="RNA">
        <title>The yeast Apq12 protein affects nucleocytoplasmic mRNA transport.</title>
        <authorList>
            <person name="Baker K.E."/>
            <person name="Coller J."/>
            <person name="Parker R."/>
        </authorList>
    </citation>
    <scope>FUNCTION</scope>
</reference>
<reference key="5">
    <citation type="journal article" date="2006" name="Proc. Natl. Acad. Sci. U.S.A.">
        <title>A global topology map of the Saccharomyces cerevisiae membrane proteome.</title>
        <authorList>
            <person name="Kim H."/>
            <person name="Melen K."/>
            <person name="Oesterberg M."/>
            <person name="von Heijne G."/>
        </authorList>
    </citation>
    <scope>TOPOLOGY [LARGE SCALE ANALYSIS]</scope>
    <source>
        <strain>ATCC 208353 / W303-1A</strain>
    </source>
</reference>
<reference key="6">
    <citation type="journal article" date="2007" name="J. Cell Biol.">
        <title>The yeast integral membrane protein Apq12 potentially links membrane dynamics to assembly of nuclear pore complexes.</title>
        <authorList>
            <person name="Scarcelli J.J."/>
            <person name="Hodge C.A."/>
            <person name="Cole C.N."/>
        </authorList>
    </citation>
    <scope>SUBCELLULAR LOCATION</scope>
    <scope>FUNCTION</scope>
</reference>
<reference key="7">
    <citation type="journal article" date="2010" name="J. Cell Sci.">
        <title>Integral membrane proteins Brr6 and Apq12 link assembly of the nuclear pore complex to lipid homeostasis in the endoplasmic reticulum.</title>
        <authorList>
            <person name="Hodge C.A."/>
            <person name="Choudhary V."/>
            <person name="Wolyniak M.J."/>
            <person name="Scarcelli J.J."/>
            <person name="Schneiter R."/>
            <person name="Cole C.N."/>
        </authorList>
    </citation>
    <scope>FUNCTION</scope>
</reference>